<name>ALLS_ECO57</name>
<dbReference type="EMBL" id="AE005174">
    <property type="protein sequence ID" value="AAG54860.1"/>
    <property type="molecule type" value="Genomic_DNA"/>
</dbReference>
<dbReference type="EMBL" id="BA000007">
    <property type="protein sequence ID" value="BAB33988.1"/>
    <property type="molecule type" value="Genomic_DNA"/>
</dbReference>
<dbReference type="PIR" id="E90699">
    <property type="entry name" value="E90699"/>
</dbReference>
<dbReference type="PIR" id="H85549">
    <property type="entry name" value="H85549"/>
</dbReference>
<dbReference type="RefSeq" id="NP_308592.1">
    <property type="nucleotide sequence ID" value="NC_002695.1"/>
</dbReference>
<dbReference type="RefSeq" id="WP_000460145.1">
    <property type="nucleotide sequence ID" value="NZ_VOAI01000030.1"/>
</dbReference>
<dbReference type="SMR" id="P0ACR1"/>
<dbReference type="STRING" id="155864.Z0658"/>
<dbReference type="GeneID" id="75202347"/>
<dbReference type="GeneID" id="915486"/>
<dbReference type="KEGG" id="ece:Z0658"/>
<dbReference type="KEGG" id="ecs:ECs_0565"/>
<dbReference type="PATRIC" id="fig|386585.9.peg.673"/>
<dbReference type="eggNOG" id="COG0583">
    <property type="taxonomic scope" value="Bacteria"/>
</dbReference>
<dbReference type="HOGENOM" id="CLU_039613_35_1_6"/>
<dbReference type="OMA" id="VYMGVWD"/>
<dbReference type="Proteomes" id="UP000000558">
    <property type="component" value="Chromosome"/>
</dbReference>
<dbReference type="Proteomes" id="UP000002519">
    <property type="component" value="Chromosome"/>
</dbReference>
<dbReference type="GO" id="GO:0003677">
    <property type="term" value="F:DNA binding"/>
    <property type="evidence" value="ECO:0007669"/>
    <property type="project" value="UniProtKB-KW"/>
</dbReference>
<dbReference type="GO" id="GO:0003700">
    <property type="term" value="F:DNA-binding transcription factor activity"/>
    <property type="evidence" value="ECO:0007669"/>
    <property type="project" value="InterPro"/>
</dbReference>
<dbReference type="FunFam" id="1.10.10.10:FF:000231">
    <property type="entry name" value="HTH-type transcriptional activator AllS"/>
    <property type="match status" value="1"/>
</dbReference>
<dbReference type="FunFam" id="3.40.190.290:FF:000005">
    <property type="entry name" value="HTH-type transcriptional activator AllS"/>
    <property type="match status" value="1"/>
</dbReference>
<dbReference type="Gene3D" id="3.40.190.290">
    <property type="match status" value="1"/>
</dbReference>
<dbReference type="Gene3D" id="1.10.10.10">
    <property type="entry name" value="Winged helix-like DNA-binding domain superfamily/Winged helix DNA-binding domain"/>
    <property type="match status" value="1"/>
</dbReference>
<dbReference type="InterPro" id="IPR050176">
    <property type="entry name" value="LTTR"/>
</dbReference>
<dbReference type="InterPro" id="IPR005119">
    <property type="entry name" value="LysR_subst-bd"/>
</dbReference>
<dbReference type="InterPro" id="IPR000847">
    <property type="entry name" value="Tscrpt_reg_HTH_LysR"/>
</dbReference>
<dbReference type="InterPro" id="IPR036388">
    <property type="entry name" value="WH-like_DNA-bd_sf"/>
</dbReference>
<dbReference type="InterPro" id="IPR036390">
    <property type="entry name" value="WH_DNA-bd_sf"/>
</dbReference>
<dbReference type="NCBIfam" id="NF007501">
    <property type="entry name" value="PRK10094.1"/>
    <property type="match status" value="1"/>
</dbReference>
<dbReference type="PANTHER" id="PTHR30579:SF0">
    <property type="entry name" value="HTH-TYPE TRANSCRIPTIONAL ACTIVATOR ALLS"/>
    <property type="match status" value="1"/>
</dbReference>
<dbReference type="PANTHER" id="PTHR30579">
    <property type="entry name" value="TRANSCRIPTIONAL REGULATOR"/>
    <property type="match status" value="1"/>
</dbReference>
<dbReference type="Pfam" id="PF00126">
    <property type="entry name" value="HTH_1"/>
    <property type="match status" value="1"/>
</dbReference>
<dbReference type="Pfam" id="PF03466">
    <property type="entry name" value="LysR_substrate"/>
    <property type="match status" value="1"/>
</dbReference>
<dbReference type="SUPFAM" id="SSF53850">
    <property type="entry name" value="Periplasmic binding protein-like II"/>
    <property type="match status" value="1"/>
</dbReference>
<dbReference type="SUPFAM" id="SSF46785">
    <property type="entry name" value="Winged helix' DNA-binding domain"/>
    <property type="match status" value="1"/>
</dbReference>
<dbReference type="PROSITE" id="PS50931">
    <property type="entry name" value="HTH_LYSR"/>
    <property type="match status" value="1"/>
</dbReference>
<feature type="chain" id="PRO_0000105777" description="HTH-type transcriptional activator AllS">
    <location>
        <begin position="1"/>
        <end position="308"/>
    </location>
</feature>
<feature type="domain" description="HTH lysR-type" evidence="2">
    <location>
        <begin position="2"/>
        <end position="59"/>
    </location>
</feature>
<feature type="DNA-binding region" description="H-T-H motif" evidence="2">
    <location>
        <begin position="19"/>
        <end position="38"/>
    </location>
</feature>
<proteinExistence type="inferred from homology"/>
<protein>
    <recommendedName>
        <fullName>HTH-type transcriptional activator AllS</fullName>
    </recommendedName>
</protein>
<accession>P0ACR1</accession>
<accession>P77702</accession>
<keyword id="KW-0010">Activator</keyword>
<keyword id="KW-0238">DNA-binding</keyword>
<keyword id="KW-1185">Reference proteome</keyword>
<keyword id="KW-0804">Transcription</keyword>
<keyword id="KW-0805">Transcription regulation</keyword>
<evidence type="ECO:0000250" key="1"/>
<evidence type="ECO:0000255" key="2">
    <source>
        <dbReference type="PROSITE-ProRule" id="PRU00253"/>
    </source>
</evidence>
<evidence type="ECO:0000305" key="3"/>
<reference key="1">
    <citation type="journal article" date="2001" name="Nature">
        <title>Genome sequence of enterohaemorrhagic Escherichia coli O157:H7.</title>
        <authorList>
            <person name="Perna N.T."/>
            <person name="Plunkett G. III"/>
            <person name="Burland V."/>
            <person name="Mau B."/>
            <person name="Glasner J.D."/>
            <person name="Rose D.J."/>
            <person name="Mayhew G.F."/>
            <person name="Evans P.S."/>
            <person name="Gregor J."/>
            <person name="Kirkpatrick H.A."/>
            <person name="Posfai G."/>
            <person name="Hackett J."/>
            <person name="Klink S."/>
            <person name="Boutin A."/>
            <person name="Shao Y."/>
            <person name="Miller L."/>
            <person name="Grotbeck E.J."/>
            <person name="Davis N.W."/>
            <person name="Lim A."/>
            <person name="Dimalanta E.T."/>
            <person name="Potamousis K."/>
            <person name="Apodaca J."/>
            <person name="Anantharaman T.S."/>
            <person name="Lin J."/>
            <person name="Yen G."/>
            <person name="Schwartz D.C."/>
            <person name="Welch R.A."/>
            <person name="Blattner F.R."/>
        </authorList>
    </citation>
    <scope>NUCLEOTIDE SEQUENCE [LARGE SCALE GENOMIC DNA]</scope>
    <source>
        <strain>O157:H7 / EDL933 / ATCC 700927 / EHEC</strain>
    </source>
</reference>
<reference key="2">
    <citation type="journal article" date="2001" name="DNA Res.">
        <title>Complete genome sequence of enterohemorrhagic Escherichia coli O157:H7 and genomic comparison with a laboratory strain K-12.</title>
        <authorList>
            <person name="Hayashi T."/>
            <person name="Makino K."/>
            <person name="Ohnishi M."/>
            <person name="Kurokawa K."/>
            <person name="Ishii K."/>
            <person name="Yokoyama K."/>
            <person name="Han C.-G."/>
            <person name="Ohtsubo E."/>
            <person name="Nakayama K."/>
            <person name="Murata T."/>
            <person name="Tanaka M."/>
            <person name="Tobe T."/>
            <person name="Iida T."/>
            <person name="Takami H."/>
            <person name="Honda T."/>
            <person name="Sasakawa C."/>
            <person name="Ogasawara N."/>
            <person name="Yasunaga T."/>
            <person name="Kuhara S."/>
            <person name="Shiba T."/>
            <person name="Hattori M."/>
            <person name="Shinagawa H."/>
        </authorList>
    </citation>
    <scope>NUCLEOTIDE SEQUENCE [LARGE SCALE GENOMIC DNA]</scope>
    <source>
        <strain>O157:H7 / Sakai / RIMD 0509952 / EHEC</strain>
    </source>
</reference>
<comment type="function">
    <text evidence="1">Positive regulator essential for the expression of AllD operon. Binds to the AllD promoter (By similarity).</text>
</comment>
<comment type="similarity">
    <text evidence="3">Belongs to the LysR transcriptional regulatory family.</text>
</comment>
<sequence>MFDPETLRTFIAVAETGSFSKAAERLCKTTATISYRIKLLEENTGVALFFRTTRSVTLTAAGEHLLSQARDWLSWLESMPSELQQVNDGVERQVNIVINNLLYNPQAVAQLLAWLNERYPFTQFHISRQIYMGVWDSLLYEGFSLAIGVTGTEALANTFSLDPLGSVQWRFVMAADHPLANVEEPLTEAQLRRFPAVNIEDSARTLTKRVAWRLPGQKEIIVPDMETKIAAHLAGVGIGFLPKSLCQSMIDNQQLVSRVIPTMRPPSPLSLAWRKFGSGKAVEDIVTLFTQRRPEISGFLEIFGNPRS</sequence>
<organism>
    <name type="scientific">Escherichia coli O157:H7</name>
    <dbReference type="NCBI Taxonomy" id="83334"/>
    <lineage>
        <taxon>Bacteria</taxon>
        <taxon>Pseudomonadati</taxon>
        <taxon>Pseudomonadota</taxon>
        <taxon>Gammaproteobacteria</taxon>
        <taxon>Enterobacterales</taxon>
        <taxon>Enterobacteriaceae</taxon>
        <taxon>Escherichia</taxon>
    </lineage>
</organism>
<gene>
    <name type="primary">allS</name>
    <name type="synonym">glxA1</name>
    <name type="ordered locus">Z0658</name>
    <name type="ordered locus">ECs0565</name>
</gene>